<proteinExistence type="evidence at protein level"/>
<comment type="function">
    <text evidence="4 5 6 7 8 9 10 11 12 13 15 16 18 19 20 21 22 23 24 25 26 27 28 29 30">Key innate sensor that recognizes and binds Z-RNA structures, which are produced by a number of viruses, such as herpesvirus, orthomyxovirus or flavivirus, and triggers different forms of cell death (PubMed:17618271, PubMed:18375758, PubMed:19590578, PubMed:23283962, PubMed:27746097, PubMed:27819681, PubMed:27917412, PubMed:28607035, PubMed:28716805, PubMed:29073079, PubMed:30050136, PubMed:30498077, PubMed:31358656, PubMed:32200799, PubMed:32296175). ZBP1 acts as an essential mediator of pyroptosis, necroptosis and apoptosis (PANoptosis), an integral part of host defense against pathogens, by activating RIPK3, caspase-8 (CASP8), and the NLRP3 inflammasome (PubMed:27746097, PubMed:27917412, PubMed:28607035, PubMed:32200799, PubMed:32296175, PubMed:32298652, PubMed:32350114). Key activator of necroptosis, a programmed cell death process in response to death-inducing TNF-alpha family members, via its ability to bind Z-RNA: once activated upon Z-RNA-binding, ZBP1 interacts and stimulates RIPK3 kinase, which phosphorylates and activates MLKL, triggering execution of programmed necrosis (PubMed:22423968, PubMed:27746097, PubMed:27819681, PubMed:27819682, PubMed:28716805, PubMed:32200799, PubMed:32296175, PubMed:32315377, PubMed:32350114). In addition to TNF-induced necroptosis, necroptosis can also take place in the nucleus in response to orthomyxoviruses infection: ZBP1 recognizes and binds Z-RNA structures that are produced in infected nuclei by orthomyxoviruses, such as the influenza A virus (IAV), leading to ZBP1 activation, RIPK3 stimulation and subsequent MLKL phosphorylation, triggering disruption of the nuclear envelope and leakage of cellular DNA into the cytosol (PubMed:32200799, PubMed:32296175). ZBP1-dependent cell death in response to IAV infection promotes interleukin-1 alpha (IL1A) induction in an NLRP3-inflammasome-independent manner: IL1A expression is required for the optimal interleukin-1 beta (IL1B) production, and together, these cytokines promote infiltration of inflammatory neutrophils to the lung, leading to the formation of neutrophil extracellular traps (PubMed:31630209). In addition to its direct role in driving necroptosis via its ability to sense Z-RNAs, also involved in PANoptosis triggered in response to bacterial infection: component of the AIM2 PANoptosome complex, a multiprotein complex that triggers PANoptosis (PubMed:34471287). Also acts as the apical sensor of fungal infection responsible for activating PANoptosis (PubMed:33109609). Involved in CASP8-mediated cell death via its interaction with RIPK1 but independently of its ability to sense Z-RNAs (PubMed:33397971). In some cell types, also able to restrict viral replication by promoting cell death-independent responses (PubMed:30635240). In response to flavivirus infection in neurons, promotes a cell death-independent pathway that restricts viral replication: together with RIPK3, promotes a death-independent transcriptional program that modifies the cellular metabolism via up-regulation expression of the enzyme ACOD1/IRG1 and production of the metabolite itaconate (PubMed:30635240). Itaconate inhibits the activity of succinate dehydrogenase, generating a metabolic state in neurons that suppresses replication of viral genomes (PubMed:30635240).</text>
</comment>
<comment type="activity regulation">
    <text evidence="10 11 21 24">ZBP1-dependent necroptosis is normally inhibited by RIPK1: RIPK1 inhibits the ZBP1-induced activation of RIPK3 via FADD-mediated recruitment of CASP8, which cleaves RIPK1 and limits TNF-induced necroptosis.</text>
</comment>
<comment type="subunit">
    <text evidence="5 6 7 8 9 10 11 13 23 25 29 30">Homodimer (PubMed:18375758). Interacts (via RIP homotypic interaction motif) with RIPK3; leading to RIPK3 activation and necroptosis; interaction is enhanced by CASP6 (PubMed:19590578, PubMed:22423968, PubMed:27746097, PubMed:27819681, PubMed:27819682, PubMed:28607035, PubMed:32200799, PubMed:32298652). Interacts (via RIP homotypic interaction motif) with RIPK1 (PubMed:19590578, PubMed:23283962, PubMed:33397971). Component of the AIM2 PANoptosome complex, a multiprotein complex that drives inflammatory cell death (PANoptosis) (PubMed:34471287).</text>
</comment>
<comment type="subunit">
    <text evidence="6 19">(Microbial infection) Interacts (via RIP homotypic interaction motif) with murid herpesvirus protein RIR1 (via RIP homotypic interaction motif); leading to inhibition of ZBP1-dependent necroptosis.</text>
</comment>
<comment type="subunit">
    <text evidence="16">(Microbial infection) Interacts with vaccinia virus E3 protein; leading to inhibit ZBP1-dependent necroptosis.</text>
</comment>
<comment type="subcellular location">
    <subcellularLocation>
        <location evidence="8 13 23 24">Cytoplasm</location>
    </subcellularLocation>
    <subcellularLocation>
        <location evidence="8 13 23 24">Nucleus</location>
    </subcellularLocation>
    <text evidence="23">Mainly cytoplasmic (PubMed:32200799). Accumulates in the nucleus in response to influenza A virus (IAV) infection: senses IAV defective viral genomes RNA in the nucleus (PubMed:32200799).</text>
</comment>
<comment type="alternative products">
    <event type="alternative splicing"/>
    <isoform>
        <id>Q9QY24-1</id>
        <name>1</name>
        <sequence type="displayed"/>
    </isoform>
    <isoform>
        <id>Q9QY24-2</id>
        <name>2</name>
        <sequence type="described" ref="VSP_004083 VSP_004084"/>
    </isoform>
</comment>
<comment type="tissue specificity">
    <text evidence="3">Expressed in lung, spleen and liver. Lower levels were seen in heart, kidney and testis. Expression is greatly up-regulated in tumor stromal cells and activated macrophages.</text>
</comment>
<comment type="induction">
    <text evidence="3 16 17">Expression is activated by IRF1 (PubMed:29321274). Up-regulated following interferon treatment (PubMed:10564822, PubMed:29073079). By lipopolysaccharides (LPS) (PubMed:10564822).</text>
</comment>
<comment type="domain">
    <text evidence="13 15 23 27 28">The Z-binding domains recognize and bind left-handed double-stranded Z-RNA structures, but not A-RNA, the right-handed double-stranded RNAs that are structurally very different from Z-RNAs (PubMed:32200799). The second Z-binding domain (also named Zalpha2) acts as a molecular switch regulating pyroptosis, necroptosis and apoptosis (PANoptosis) (PubMed:32350114, PubMed:33109609). The second Z-binding domain is essential for sensing influenza A virus (IAV) Z-RNAs (PubMed:28607035, PubMed:28716805, PubMed:32350114).</text>
</comment>
<comment type="PTM">
    <text evidence="14">Ubiquitinated; polyubiquitinated following influenza A virus (IAV) infection.</text>
</comment>
<comment type="PTM">
    <text evidence="5">Phosphorylated.</text>
</comment>
<comment type="disruption phenotype">
    <text evidence="7 9 10 11 12 23">Mice are resistant to necroptosis, characterized by a decrease in epithelial cell death and an increase in virus replication (PubMed:22423968, PubMed:27746097, PubMed:27917412). At a modestly lethal dose of influenza A virus (IAV), mice display significantly increased rates of mortality, probably caused by a failure to eliminate infected cells and limit virus spread in pulmonary tissue (PubMed:32200799). Perinatal lethality observed in Ripk1 knockout mice is rescued in knockout mice lacking both Ripk1 and Zbp1 (PubMed:27819681, PubMed:27819682). Skin inflammation observed in Ripk1(mRHIM) mutant mice is abrogated in Ripk1(mRHIM) mutant mice that also lack Zbp1 (PubMed:27819681).</text>
</comment>
<comment type="caution">
    <text evidence="9 12">According to a report, mice lacking Zbp1 display reductions in respiratory epithelial damage and lung inflammation (PubMed:27917412). However, the virus persists and replicates in the infected cells leading to a delay in recovery from infection, but the animals are protected from mortality (PubMed:27917412). In contrast, another article reported increased mortality in knockout mice, probably caused by increased virus burden (PubMed:27746097). However, as this study did not assess the inflammatory response in the lungs, it is difficult to compare ZBP1 regulation of lung inflammation between these two studies (PubMed:27746097).</text>
</comment>
<dbReference type="EMBL" id="AF136520">
    <property type="protein sequence ID" value="AAF17234.1"/>
    <property type="molecule type" value="mRNA"/>
</dbReference>
<dbReference type="EMBL" id="AK008179">
    <property type="protein sequence ID" value="BAB25513.1"/>
    <property type="molecule type" value="mRNA"/>
</dbReference>
<dbReference type="EMBL" id="BC020033">
    <property type="protein sequence ID" value="AAH20033.1"/>
    <property type="molecule type" value="mRNA"/>
</dbReference>
<dbReference type="CCDS" id="CCDS17142.1">
    <molecule id="Q9QY24-1"/>
</dbReference>
<dbReference type="CCDS" id="CCDS50813.1">
    <molecule id="Q9QY24-2"/>
</dbReference>
<dbReference type="RefSeq" id="NP_001132991.1">
    <molecule id="Q9QY24-2"/>
    <property type="nucleotide sequence ID" value="NM_001139519.1"/>
</dbReference>
<dbReference type="PDB" id="1J75">
    <property type="method" value="X-ray"/>
    <property type="resolution" value="1.85 A"/>
    <property type="chains" value="A=8-70"/>
</dbReference>
<dbReference type="PDB" id="2HEO">
    <property type="method" value="X-ray"/>
    <property type="resolution" value="1.70 A"/>
    <property type="chains" value="A/D=8-70"/>
</dbReference>
<dbReference type="PDBsum" id="1J75"/>
<dbReference type="PDBsum" id="2HEO"/>
<dbReference type="SMR" id="Q9QY24"/>
<dbReference type="BioGRID" id="208387">
    <property type="interactions" value="4"/>
</dbReference>
<dbReference type="CORUM" id="Q9QY24"/>
<dbReference type="DIP" id="DIP-29879N"/>
<dbReference type="FunCoup" id="Q9QY24">
    <property type="interactions" value="652"/>
</dbReference>
<dbReference type="IntAct" id="Q9QY24">
    <property type="interactions" value="2"/>
</dbReference>
<dbReference type="STRING" id="10090.ENSMUSP00000029018"/>
<dbReference type="GlyGen" id="Q9QY24">
    <property type="glycosylation" value="2 sites, 1 O-linked glycan (1 site)"/>
</dbReference>
<dbReference type="iPTMnet" id="Q9QY24"/>
<dbReference type="PhosphoSitePlus" id="Q9QY24"/>
<dbReference type="jPOST" id="Q9QY24"/>
<dbReference type="PaxDb" id="10090-ENSMUSP00000029018"/>
<dbReference type="ProteomicsDB" id="275337">
    <molecule id="Q9QY24-1"/>
</dbReference>
<dbReference type="ProteomicsDB" id="275338">
    <molecule id="Q9QY24-2"/>
</dbReference>
<dbReference type="Antibodypedia" id="14231">
    <property type="antibodies" value="215 antibodies from 36 providers"/>
</dbReference>
<dbReference type="DNASU" id="58203"/>
<dbReference type="Ensembl" id="ENSMUST00000109116.3">
    <molecule id="Q9QY24-2"/>
    <property type="protein sequence ID" value="ENSMUSP00000104744.3"/>
    <property type="gene ID" value="ENSMUSG00000027514.15"/>
</dbReference>
<dbReference type="GeneID" id="58203"/>
<dbReference type="KEGG" id="mmu:58203"/>
<dbReference type="UCSC" id="uc008odp.2">
    <molecule id="Q9QY24-2"/>
    <property type="organism name" value="mouse"/>
</dbReference>
<dbReference type="AGR" id="MGI:1927449"/>
<dbReference type="CTD" id="81030"/>
<dbReference type="MGI" id="MGI:1927449">
    <property type="gene designation" value="Zbp1"/>
</dbReference>
<dbReference type="VEuPathDB" id="HostDB:ENSMUSG00000027514"/>
<dbReference type="eggNOG" id="ENOG502SRWE">
    <property type="taxonomic scope" value="Eukaryota"/>
</dbReference>
<dbReference type="GeneTree" id="ENSGT00390000002234"/>
<dbReference type="HOGENOM" id="CLU_1447219_0_0_1"/>
<dbReference type="InParanoid" id="Q9QY24"/>
<dbReference type="OrthoDB" id="9837317at2759"/>
<dbReference type="PhylomeDB" id="Q9QY24"/>
<dbReference type="BioGRID-ORCS" id="58203">
    <property type="hits" value="2 hits in 80 CRISPR screens"/>
</dbReference>
<dbReference type="ChiTaRS" id="Zbp1">
    <property type="organism name" value="mouse"/>
</dbReference>
<dbReference type="EvolutionaryTrace" id="Q9QY24"/>
<dbReference type="PRO" id="PR:Q9QY24"/>
<dbReference type="Proteomes" id="UP000000589">
    <property type="component" value="Chromosome 2"/>
</dbReference>
<dbReference type="RNAct" id="Q9QY24">
    <property type="molecule type" value="protein"/>
</dbReference>
<dbReference type="Bgee" id="ENSMUSG00000027514">
    <property type="expression patterns" value="Expressed in small intestine Peyer's patch and 80 other cell types or tissues"/>
</dbReference>
<dbReference type="ExpressionAtlas" id="Q9QY24">
    <property type="expression patterns" value="baseline and differential"/>
</dbReference>
<dbReference type="GO" id="GO:0005737">
    <property type="term" value="C:cytoplasm"/>
    <property type="evidence" value="ECO:0000314"/>
    <property type="project" value="UniProtKB"/>
</dbReference>
<dbReference type="GO" id="GO:0005829">
    <property type="term" value="C:cytosol"/>
    <property type="evidence" value="ECO:0000266"/>
    <property type="project" value="MGI"/>
</dbReference>
<dbReference type="GO" id="GO:0005634">
    <property type="term" value="C:nucleus"/>
    <property type="evidence" value="ECO:0000314"/>
    <property type="project" value="UniProtKB"/>
</dbReference>
<dbReference type="GO" id="GO:0003677">
    <property type="term" value="F:DNA binding"/>
    <property type="evidence" value="ECO:0000314"/>
    <property type="project" value="MGI"/>
</dbReference>
<dbReference type="GO" id="GO:0003726">
    <property type="term" value="F:double-stranded RNA adenosine deaminase activity"/>
    <property type="evidence" value="ECO:0007669"/>
    <property type="project" value="InterPro"/>
</dbReference>
<dbReference type="GO" id="GO:0003725">
    <property type="term" value="F:double-stranded RNA binding"/>
    <property type="evidence" value="ECO:0000314"/>
    <property type="project" value="UniProtKB"/>
</dbReference>
<dbReference type="GO" id="GO:0003692">
    <property type="term" value="F:left-handed Z-DNA binding"/>
    <property type="evidence" value="ECO:0000314"/>
    <property type="project" value="MGI"/>
</dbReference>
<dbReference type="GO" id="GO:0002218">
    <property type="term" value="P:activation of innate immune response"/>
    <property type="evidence" value="ECO:0000314"/>
    <property type="project" value="UniProtKB"/>
</dbReference>
<dbReference type="GO" id="GO:0006915">
    <property type="term" value="P:apoptotic process"/>
    <property type="evidence" value="ECO:0007669"/>
    <property type="project" value="UniProtKB-KW"/>
</dbReference>
<dbReference type="GO" id="GO:0050832">
    <property type="term" value="P:defense response to fungus"/>
    <property type="evidence" value="ECO:0000315"/>
    <property type="project" value="UniProtKB"/>
</dbReference>
<dbReference type="GO" id="GO:0051607">
    <property type="term" value="P:defense response to virus"/>
    <property type="evidence" value="ECO:0000314"/>
    <property type="project" value="UniProtKB"/>
</dbReference>
<dbReference type="GO" id="GO:0045087">
    <property type="term" value="P:innate immune response"/>
    <property type="evidence" value="ECO:0007669"/>
    <property type="project" value="UniProtKB-KW"/>
</dbReference>
<dbReference type="GO" id="GO:0043065">
    <property type="term" value="P:positive regulation of apoptotic process"/>
    <property type="evidence" value="ECO:0000314"/>
    <property type="project" value="UniProtKB"/>
</dbReference>
<dbReference type="GO" id="GO:0050729">
    <property type="term" value="P:positive regulation of inflammatory response"/>
    <property type="evidence" value="ECO:0000315"/>
    <property type="project" value="UniProtKB"/>
</dbReference>
<dbReference type="GO" id="GO:0060545">
    <property type="term" value="P:positive regulation of necroptotic process"/>
    <property type="evidence" value="ECO:0000314"/>
    <property type="project" value="UniProtKB"/>
</dbReference>
<dbReference type="GO" id="GO:0060340">
    <property type="term" value="P:positive regulation of type I interferon-mediated signaling pathway"/>
    <property type="evidence" value="ECO:0000315"/>
    <property type="project" value="MGI"/>
</dbReference>
<dbReference type="GO" id="GO:0070269">
    <property type="term" value="P:pyroptotic inflammatory response"/>
    <property type="evidence" value="ECO:0000315"/>
    <property type="project" value="UniProtKB"/>
</dbReference>
<dbReference type="GO" id="GO:0050727">
    <property type="term" value="P:regulation of inflammatory response"/>
    <property type="evidence" value="ECO:0000315"/>
    <property type="project" value="UniProtKB"/>
</dbReference>
<dbReference type="GO" id="GO:2000659">
    <property type="term" value="P:regulation of interleukin-1-mediated signaling pathway"/>
    <property type="evidence" value="ECO:0000315"/>
    <property type="project" value="UniProtKB"/>
</dbReference>
<dbReference type="FunFam" id="1.10.10.10:FF:000525">
    <property type="entry name" value="Z-DNA binding protein 1"/>
    <property type="match status" value="1"/>
</dbReference>
<dbReference type="Gene3D" id="1.10.10.10">
    <property type="entry name" value="Winged helix-like DNA-binding domain superfamily/Winged helix DNA-binding domain"/>
    <property type="match status" value="2"/>
</dbReference>
<dbReference type="InterPro" id="IPR025735">
    <property type="entry name" value="RHIM"/>
</dbReference>
<dbReference type="InterPro" id="IPR036388">
    <property type="entry name" value="WH-like_DNA-bd_sf"/>
</dbReference>
<dbReference type="InterPro" id="IPR036390">
    <property type="entry name" value="WH_DNA-bd_sf"/>
</dbReference>
<dbReference type="InterPro" id="IPR042371">
    <property type="entry name" value="Z_dom"/>
</dbReference>
<dbReference type="InterPro" id="IPR042361">
    <property type="entry name" value="ZBP1"/>
</dbReference>
<dbReference type="PANTHER" id="PTHR14966">
    <property type="entry name" value="Z-DNA-BINDING PROTEIN 1"/>
    <property type="match status" value="1"/>
</dbReference>
<dbReference type="PANTHER" id="PTHR14966:SF0">
    <property type="entry name" value="Z-DNA-BINDING PROTEIN 1"/>
    <property type="match status" value="1"/>
</dbReference>
<dbReference type="Pfam" id="PF12721">
    <property type="entry name" value="RHIM"/>
    <property type="match status" value="2"/>
</dbReference>
<dbReference type="Pfam" id="PF02295">
    <property type="entry name" value="z-alpha"/>
    <property type="match status" value="2"/>
</dbReference>
<dbReference type="SMART" id="SM00550">
    <property type="entry name" value="Zalpha"/>
    <property type="match status" value="2"/>
</dbReference>
<dbReference type="SUPFAM" id="SSF46785">
    <property type="entry name" value="Winged helix' DNA-binding domain"/>
    <property type="match status" value="2"/>
</dbReference>
<dbReference type="PROSITE" id="PS50139">
    <property type="entry name" value="Z_BINDING"/>
    <property type="match status" value="2"/>
</dbReference>
<accession>Q9QY24</accession>
<accession>Q8VE02</accession>
<accession>Q9D8B9</accession>
<keyword id="KW-0002">3D-structure</keyword>
<keyword id="KW-0025">Alternative splicing</keyword>
<keyword id="KW-0051">Antiviral defense</keyword>
<keyword id="KW-0053">Apoptosis</keyword>
<keyword id="KW-0963">Cytoplasm</keyword>
<keyword id="KW-0238">DNA-binding</keyword>
<keyword id="KW-0945">Host-virus interaction</keyword>
<keyword id="KW-0391">Immunity</keyword>
<keyword id="KW-0399">Innate immunity</keyword>
<keyword id="KW-1017">Isopeptide bond</keyword>
<keyword id="KW-1210">Necrosis</keyword>
<keyword id="KW-0539">Nucleus</keyword>
<keyword id="KW-1185">Reference proteome</keyword>
<keyword id="KW-0677">Repeat</keyword>
<keyword id="KW-0694">RNA-binding</keyword>
<keyword id="KW-0832">Ubl conjugation</keyword>
<gene>
    <name evidence="33 35" type="primary">Zbp1</name>
    <name evidence="31" type="synonym">Dlm1</name>
</gene>
<sequence>MAEAPVDLSTGDNLEQKILQVLSDDGGPVKIGQLVKKCQVPKKTLNQVLYRLKKEDRVSSPEPATWSIGGAASGDGAPAIPENSSAQPSLDERILRFLEANGPHRALHIAKALGMTTAKEVNPLLYSMRNKHLLSYDGQTWKIYHSRQEGQDIAHSGVTQESPAIICQHNPVNMICQQGANSHISIANSNAIQIGHGNVIVREKACGEPGPRTSHPLPLAWDASAQDMPPVAHGAQYIYMDKSLLQQVQLGHHNEMSLVGDAGKHPSYSFSDSPPEVSTTTADPGASFNMQTFEPGPHPEGDTVQTVHIKSCFLEDATIGNGNKMTIHLRSKGEVMESGDSEEPKKEDTGTSSEATPPRSCQHTPSDSMLPTSELRAMALGDSSPQTTEPVLREHEVQDIESSQDTGLSKQ</sequence>
<reference key="1">
    <citation type="journal article" date="1999" name="Gene">
        <title>Cloning of DLM-1, a novel gene that is up-regulated in activated macrophages, using RNA differential display.</title>
        <authorList>
            <person name="Fu Y."/>
            <person name="Comella N."/>
            <person name="Tognazzi K."/>
            <person name="Brown L.F."/>
            <person name="Dvorak H.F."/>
            <person name="Kocher O."/>
        </authorList>
    </citation>
    <scope>NUCLEOTIDE SEQUENCE [MRNA] (ISOFORM 1)</scope>
    <scope>TISSUE SPECIFICITY</scope>
    <scope>INDUCTION</scope>
    <source>
        <strain>C3Heb/FeJ</strain>
        <tissue>Liver</tissue>
    </source>
</reference>
<reference key="2">
    <citation type="journal article" date="2005" name="Science">
        <title>The transcriptional landscape of the mammalian genome.</title>
        <authorList>
            <person name="Carninci P."/>
            <person name="Kasukawa T."/>
            <person name="Katayama S."/>
            <person name="Gough J."/>
            <person name="Frith M.C."/>
            <person name="Maeda N."/>
            <person name="Oyama R."/>
            <person name="Ravasi T."/>
            <person name="Lenhard B."/>
            <person name="Wells C."/>
            <person name="Kodzius R."/>
            <person name="Shimokawa K."/>
            <person name="Bajic V.B."/>
            <person name="Brenner S.E."/>
            <person name="Batalov S."/>
            <person name="Forrest A.R."/>
            <person name="Zavolan M."/>
            <person name="Davis M.J."/>
            <person name="Wilming L.G."/>
            <person name="Aidinis V."/>
            <person name="Allen J.E."/>
            <person name="Ambesi-Impiombato A."/>
            <person name="Apweiler R."/>
            <person name="Aturaliya R.N."/>
            <person name="Bailey T.L."/>
            <person name="Bansal M."/>
            <person name="Baxter L."/>
            <person name="Beisel K.W."/>
            <person name="Bersano T."/>
            <person name="Bono H."/>
            <person name="Chalk A.M."/>
            <person name="Chiu K.P."/>
            <person name="Choudhary V."/>
            <person name="Christoffels A."/>
            <person name="Clutterbuck D.R."/>
            <person name="Crowe M.L."/>
            <person name="Dalla E."/>
            <person name="Dalrymple B.P."/>
            <person name="de Bono B."/>
            <person name="Della Gatta G."/>
            <person name="di Bernardo D."/>
            <person name="Down T."/>
            <person name="Engstrom P."/>
            <person name="Fagiolini M."/>
            <person name="Faulkner G."/>
            <person name="Fletcher C.F."/>
            <person name="Fukushima T."/>
            <person name="Furuno M."/>
            <person name="Futaki S."/>
            <person name="Gariboldi M."/>
            <person name="Georgii-Hemming P."/>
            <person name="Gingeras T.R."/>
            <person name="Gojobori T."/>
            <person name="Green R.E."/>
            <person name="Gustincich S."/>
            <person name="Harbers M."/>
            <person name="Hayashi Y."/>
            <person name="Hensch T.K."/>
            <person name="Hirokawa N."/>
            <person name="Hill D."/>
            <person name="Huminiecki L."/>
            <person name="Iacono M."/>
            <person name="Ikeo K."/>
            <person name="Iwama A."/>
            <person name="Ishikawa T."/>
            <person name="Jakt M."/>
            <person name="Kanapin A."/>
            <person name="Katoh M."/>
            <person name="Kawasawa Y."/>
            <person name="Kelso J."/>
            <person name="Kitamura H."/>
            <person name="Kitano H."/>
            <person name="Kollias G."/>
            <person name="Krishnan S.P."/>
            <person name="Kruger A."/>
            <person name="Kummerfeld S.K."/>
            <person name="Kurochkin I.V."/>
            <person name="Lareau L.F."/>
            <person name="Lazarevic D."/>
            <person name="Lipovich L."/>
            <person name="Liu J."/>
            <person name="Liuni S."/>
            <person name="McWilliam S."/>
            <person name="Madan Babu M."/>
            <person name="Madera M."/>
            <person name="Marchionni L."/>
            <person name="Matsuda H."/>
            <person name="Matsuzawa S."/>
            <person name="Miki H."/>
            <person name="Mignone F."/>
            <person name="Miyake S."/>
            <person name="Morris K."/>
            <person name="Mottagui-Tabar S."/>
            <person name="Mulder N."/>
            <person name="Nakano N."/>
            <person name="Nakauchi H."/>
            <person name="Ng P."/>
            <person name="Nilsson R."/>
            <person name="Nishiguchi S."/>
            <person name="Nishikawa S."/>
            <person name="Nori F."/>
            <person name="Ohara O."/>
            <person name="Okazaki Y."/>
            <person name="Orlando V."/>
            <person name="Pang K.C."/>
            <person name="Pavan W.J."/>
            <person name="Pavesi G."/>
            <person name="Pesole G."/>
            <person name="Petrovsky N."/>
            <person name="Piazza S."/>
            <person name="Reed J."/>
            <person name="Reid J.F."/>
            <person name="Ring B.Z."/>
            <person name="Ringwald M."/>
            <person name="Rost B."/>
            <person name="Ruan Y."/>
            <person name="Salzberg S.L."/>
            <person name="Sandelin A."/>
            <person name="Schneider C."/>
            <person name="Schoenbach C."/>
            <person name="Sekiguchi K."/>
            <person name="Semple C.A."/>
            <person name="Seno S."/>
            <person name="Sessa L."/>
            <person name="Sheng Y."/>
            <person name="Shibata Y."/>
            <person name="Shimada H."/>
            <person name="Shimada K."/>
            <person name="Silva D."/>
            <person name="Sinclair B."/>
            <person name="Sperling S."/>
            <person name="Stupka E."/>
            <person name="Sugiura K."/>
            <person name="Sultana R."/>
            <person name="Takenaka Y."/>
            <person name="Taki K."/>
            <person name="Tammoja K."/>
            <person name="Tan S.L."/>
            <person name="Tang S."/>
            <person name="Taylor M.S."/>
            <person name="Tegner J."/>
            <person name="Teichmann S.A."/>
            <person name="Ueda H.R."/>
            <person name="van Nimwegen E."/>
            <person name="Verardo R."/>
            <person name="Wei C.L."/>
            <person name="Yagi K."/>
            <person name="Yamanishi H."/>
            <person name="Zabarovsky E."/>
            <person name="Zhu S."/>
            <person name="Zimmer A."/>
            <person name="Hide W."/>
            <person name="Bult C."/>
            <person name="Grimmond S.M."/>
            <person name="Teasdale R.D."/>
            <person name="Liu E.T."/>
            <person name="Brusic V."/>
            <person name="Quackenbush J."/>
            <person name="Wahlestedt C."/>
            <person name="Mattick J.S."/>
            <person name="Hume D.A."/>
            <person name="Kai C."/>
            <person name="Sasaki D."/>
            <person name="Tomaru Y."/>
            <person name="Fukuda S."/>
            <person name="Kanamori-Katayama M."/>
            <person name="Suzuki M."/>
            <person name="Aoki J."/>
            <person name="Arakawa T."/>
            <person name="Iida J."/>
            <person name="Imamura K."/>
            <person name="Itoh M."/>
            <person name="Kato T."/>
            <person name="Kawaji H."/>
            <person name="Kawagashira N."/>
            <person name="Kawashima T."/>
            <person name="Kojima M."/>
            <person name="Kondo S."/>
            <person name="Konno H."/>
            <person name="Nakano K."/>
            <person name="Ninomiya N."/>
            <person name="Nishio T."/>
            <person name="Okada M."/>
            <person name="Plessy C."/>
            <person name="Shibata K."/>
            <person name="Shiraki T."/>
            <person name="Suzuki S."/>
            <person name="Tagami M."/>
            <person name="Waki K."/>
            <person name="Watahiki A."/>
            <person name="Okamura-Oho Y."/>
            <person name="Suzuki H."/>
            <person name="Kawai J."/>
            <person name="Hayashizaki Y."/>
        </authorList>
    </citation>
    <scope>NUCLEOTIDE SEQUENCE [LARGE SCALE MRNA] (ISOFORM 2)</scope>
    <source>
        <strain>C57BL/6J</strain>
        <tissue>Small intestine</tissue>
    </source>
</reference>
<reference key="3">
    <citation type="journal article" date="2004" name="Genome Res.">
        <title>The status, quality, and expansion of the NIH full-length cDNA project: the Mammalian Gene Collection (MGC).</title>
        <authorList>
            <consortium name="The MGC Project Team"/>
        </authorList>
    </citation>
    <scope>NUCLEOTIDE SEQUENCE [LARGE SCALE MRNA] (ISOFORM 1)</scope>
    <source>
        <tissue>Mammary tumor</tissue>
    </source>
</reference>
<reference key="4">
    <citation type="journal article" date="2007" name="Nature">
        <title>DAI (DLM-1/ZBP1) is a cytosolic DNA sensor and an activator of innate immune response.</title>
        <authorList>
            <person name="Takaoka A."/>
            <person name="Wang Z."/>
            <person name="Choi M.K."/>
            <person name="Yanai H."/>
            <person name="Negishi H."/>
            <person name="Ban T."/>
            <person name="Lu Y."/>
            <person name="Miyagishi M."/>
            <person name="Kodama T."/>
            <person name="Honda K."/>
            <person name="Ohba Y."/>
            <person name="Taniguchi T."/>
        </authorList>
    </citation>
    <scope>FUNCTION</scope>
</reference>
<reference key="5">
    <citation type="journal article" date="2008" name="Proc. Natl. Acad. Sci. U.S.A.">
        <title>Regulation of innate immune responses by DAI (DLM-1/ZBP1) and other DNA-sensing molecules.</title>
        <authorList>
            <person name="Wang Z."/>
            <person name="Choi M.K."/>
            <person name="Ban T."/>
            <person name="Yanai H."/>
            <person name="Negishi H."/>
            <person name="Lu Y."/>
            <person name="Tamura T."/>
            <person name="Takaoka A."/>
            <person name="Nishikura K."/>
            <person name="Taniguchi T."/>
        </authorList>
    </citation>
    <scope>FUNCTION</scope>
    <scope>SUBUNIT</scope>
    <scope>PHOSPHORYLATION</scope>
    <scope>MUTAGENESIS OF 352-SER-SER-353</scope>
</reference>
<reference key="6">
    <citation type="journal article" date="2009" name="EMBO Rep.">
        <title>DAI/ZBP1 recruits RIP1 and RIP3 through RIP homotypic interaction motifs to activate NF-kappaB.</title>
        <authorList>
            <person name="Rebsamen M."/>
            <person name="Heinz L.X."/>
            <person name="Meylan E."/>
            <person name="Michallet M.C."/>
            <person name="Schroder K."/>
            <person name="Hofmann K."/>
            <person name="Vazquez J."/>
            <person name="Benedict C.A."/>
            <person name="Tschopp J."/>
        </authorList>
    </citation>
    <scope>FUNCTION</scope>
    <scope>INTERACTION WITH RIPK1; RIPK3 AND MURID HERPESVIRUS 1 RIR1 (MICROBIAL INFECTION)</scope>
</reference>
<reference key="7">
    <citation type="journal article" date="2009" name="Immunity">
        <title>The phagosomal proteome in interferon-gamma-activated macrophages.</title>
        <authorList>
            <person name="Trost M."/>
            <person name="English L."/>
            <person name="Lemieux S."/>
            <person name="Courcelles M."/>
            <person name="Desjardins M."/>
            <person name="Thibault P."/>
        </authorList>
    </citation>
    <scope>IDENTIFICATION BY MASS SPECTROMETRY [LARGE SCALE ANALYSIS]</scope>
</reference>
<reference key="8">
    <citation type="journal article" date="2010" name="Cell">
        <title>A tissue-specific atlas of mouse protein phosphorylation and expression.</title>
        <authorList>
            <person name="Huttlin E.L."/>
            <person name="Jedrychowski M.P."/>
            <person name="Elias J.E."/>
            <person name="Goswami T."/>
            <person name="Rad R."/>
            <person name="Beausoleil S.A."/>
            <person name="Villen J."/>
            <person name="Haas W."/>
            <person name="Sowa M.E."/>
            <person name="Gygi S.P."/>
        </authorList>
    </citation>
    <scope>IDENTIFICATION BY MASS SPECTROMETRY [LARGE SCALE ANALYSIS]</scope>
    <source>
        <tissue>Liver</tissue>
        <tissue>Spleen</tissue>
    </source>
</reference>
<reference key="9">
    <citation type="journal article" date="2012" name="Cell Host Microbe">
        <title>DAI/ZBP1/DLM-1 complexes with RIP3 to mediate virus-induced programmed necrosis that is targeted by murine cytomegalovirus vIRA.</title>
        <authorList>
            <person name="Upton J.W."/>
            <person name="Kaiser W.J."/>
            <person name="Mocarski E.S."/>
        </authorList>
    </citation>
    <scope>FUNCTION</scope>
    <scope>DISRUPTION PHENOTYPE</scope>
    <scope>INTERACTION WITH RIPK3</scope>
</reference>
<reference key="10">
    <citation type="journal article" date="2019" name="Cell Host Microbe">
        <title>DAI/ZBP1/DLM-1 complexes with RIP3 to mediate virus-induced programmed necrosis that is targeted by murine cytomegalovirus vIRA.</title>
        <authorList>
            <person name="Upton J.W."/>
            <person name="Kaiser W.J."/>
            <person name="Mocarski E.S."/>
        </authorList>
    </citation>
    <scope>ERRATUM OF PUBMED:22423968</scope>
</reference>
<reference key="11">
    <citation type="journal article" date="2013" name="J. Virol.">
        <title>DNA sensing-independent inhibition of herpes simplex virus 1 replication by DAI/ZBP1.</title>
        <authorList>
            <person name="Pham T.H."/>
            <person name="Kwon K.M."/>
            <person name="Kim Y.E."/>
            <person name="Kim K.K."/>
            <person name="Ahn J.H."/>
        </authorList>
    </citation>
    <scope>FUNCTION</scope>
    <scope>SUBCELLULAR LOCATION</scope>
    <scope>INTERACTION WITH RIPK1</scope>
</reference>
<reference key="12">
    <citation type="journal article" date="2016" name="Cell Host Microbe">
        <title>DAI senses influenza A virus genomic RNA and activates RIPK3-dependent cell death.</title>
        <authorList>
            <person name="Thapa R.J."/>
            <person name="Ingram J.P."/>
            <person name="Ragan K.B."/>
            <person name="Nogusa S."/>
            <person name="Boyd D.F."/>
            <person name="Benitez A.A."/>
            <person name="Sridharan H."/>
            <person name="Kosoff R."/>
            <person name="Shubina M."/>
            <person name="Landsteiner V.J."/>
            <person name="Andrake M."/>
            <person name="Vogel P."/>
            <person name="Sigal L.J."/>
            <person name="tenOever B.R."/>
            <person name="Thomas P.G."/>
            <person name="Upton J.W."/>
            <person name="Balachandran S."/>
        </authorList>
    </citation>
    <scope>FUNCTION</scope>
    <scope>INTERACTION WITH RIPK3</scope>
    <scope>DISRUPTION PHENOTYPE</scope>
    <scope>MUTAGENESIS OF 122-ASN--TYR-126</scope>
</reference>
<reference key="13">
    <citation type="journal article" date="2016" name="Sci. Immunol.">
        <title>ZBP1/DAI is an innate sensor of influenza virus triggering the NLRP3 inflammasome and programmed cell death pathways.</title>
        <authorList>
            <person name="Kuriakose T."/>
            <person name="Man S.M."/>
            <person name="Malireddi R.K."/>
            <person name="Karki R."/>
            <person name="Kesavardhana S."/>
            <person name="Place D.E."/>
            <person name="Neale G."/>
            <person name="Vogel P."/>
            <person name="Kanneganti T.D."/>
        </authorList>
    </citation>
    <scope>FUNCTION</scope>
    <scope>DISRUPTION PHENOTYPE</scope>
</reference>
<reference key="14">
    <citation type="journal article" date="2016" name="Nature">
        <title>RIPK1 counteracts ZBP1-mediated necroptosis to inhibit inflammation.</title>
        <authorList>
            <person name="Lin J."/>
            <person name="Kumari S."/>
            <person name="Kim C."/>
            <person name="Van T.M."/>
            <person name="Wachsmuth L."/>
            <person name="Polykratis A."/>
            <person name="Pasparakis M."/>
        </authorList>
    </citation>
    <scope>FUNCTION</scope>
    <scope>ACTIVITY REGULATION</scope>
    <scope>DISRUPTION PHENOTYPE</scope>
    <scope>INTERACTION WITH RIPK3</scope>
</reference>
<reference key="15">
    <citation type="journal article" date="2016" name="Nature">
        <title>RIPK1 inhibits ZBP1-driven necroptosis during development.</title>
        <authorList>
            <person name="Newton K."/>
            <person name="Wickliffe K.E."/>
            <person name="Maltzman A."/>
            <person name="Dugger D.L."/>
            <person name="Strasser A."/>
            <person name="Pham V.C."/>
            <person name="Lill J.R."/>
            <person name="Roose-Girma M."/>
            <person name="Warming S."/>
            <person name="Solon M."/>
            <person name="Ngu H."/>
            <person name="Webster J.D."/>
            <person name="Dixit V.M."/>
        </authorList>
    </citation>
    <scope>FUNCTION</scope>
    <scope>ACTIVITY REGULATION</scope>
    <scope>DISRUPTION PHENOTYPE</scope>
    <scope>INTERACTION WITH RIPK3</scope>
</reference>
<reference key="16">
    <citation type="journal article" date="2017" name="EMBO J.">
        <title>Sensing of viral and endogenous RNA by ZBP1/DAI induces necroptosis.</title>
        <authorList>
            <person name="Maelfait J."/>
            <person name="Liverpool L."/>
            <person name="Bridgeman A."/>
            <person name="Ragan K.B."/>
            <person name="Upton J.W."/>
            <person name="Rehwinkel J."/>
        </authorList>
    </citation>
    <scope>FUNCTION</scope>
    <scope>DOMAIN</scope>
    <scope>MUTAGENESIS OF 46-ASN--TYR-50 AND 122-ASN--TYR-126</scope>
</reference>
<reference key="17">
    <citation type="journal article" date="2017" name="EMBO Rep.">
        <title>Murine cytomegalovirus IE3-dependent transcription is required for DAI/ZBP1-mediated necroptosis.</title>
        <authorList>
            <person name="Sridharan H."/>
            <person name="Ragan K.B."/>
            <person name="Guo H."/>
            <person name="Gilley R.P."/>
            <person name="Landsteiner V.J."/>
            <person name="Kaiser W.J."/>
            <person name="Upton J.W."/>
        </authorList>
    </citation>
    <scope>FUNCTION</scope>
    <scope>SUBCELLULAR LOCATION</scope>
    <scope>INTERACTION WITH RIPK3</scope>
    <scope>DOMAIN</scope>
    <scope>MUTAGENESIS OF 46-ASN--TYR-50; 122-ASN--TYR-126; 192-ILE--GLY-195 AND 248-VAL--GLY-251</scope>
</reference>
<reference key="18">
    <citation type="journal article" date="2017" name="J. Exp. Med.">
        <title>ZBP1/DAI ubiquitination and sensing of influenza vRNPs activate programmed cell death.</title>
        <authorList>
            <person name="Kesavardhana S."/>
            <person name="Kuriakose T."/>
            <person name="Guy C.S."/>
            <person name="Samir P."/>
            <person name="Malireddi R.K.S."/>
            <person name="Mishra A."/>
            <person name="Kanneganti T.D."/>
        </authorList>
    </citation>
    <scope>UBIQUITINATION AT LYS-17 AND LYS-43</scope>
</reference>
<reference key="19">
    <citation type="journal article" date="2017" name="Proc. Natl. Acad. Sci. U.S.A.">
        <title>Inhibition of DAI-dependent necroptosis by the Z-DNA binding domain of the vaccinia virus innate immune evasion protein, E3.</title>
        <authorList>
            <person name="Koehler H."/>
            <person name="Cotsmire S."/>
            <person name="Langland J."/>
            <person name="Kibler K.V."/>
            <person name="Kalman D."/>
            <person name="Upton J.W."/>
            <person name="Mocarski E.S."/>
            <person name="Jacobs B.L."/>
        </authorList>
    </citation>
    <scope>FUNCTION</scope>
    <scope>INDUCTION</scope>
    <scope>INTERACTION WITH VACCINIA VIRUS PROTEIN E3</scope>
</reference>
<reference key="20">
    <citation type="journal article" date="2018" name="Cell Death Dis.">
        <title>Species-independent contribution of ZBP1/DAI/DLM-1-triggered necroptosis in host defense against HSV1.</title>
        <authorList>
            <person name="Guo H."/>
            <person name="Gilley R.P."/>
            <person name="Fisher A."/>
            <person name="Lane R."/>
            <person name="Landsteiner V.J."/>
            <person name="Ragan K.B."/>
            <person name="Dovey C.M."/>
            <person name="Carette J.E."/>
            <person name="Upton J.W."/>
            <person name="Mocarski E.S."/>
            <person name="Kaiser W.J."/>
        </authorList>
    </citation>
    <scope>FUNCTION</scope>
    <scope>MUTAGENESIS OF 46-ASN--TYR-50; 122-ASN--TYR-126; 192-ILE--GLY-195 AND 248-VAL--GLY-251</scope>
</reference>
<reference key="21">
    <citation type="journal article" date="2018" name="J. Immunol.">
        <title>IRF1 is a transcriptional regulator of ZBP1 promoting NLRP3 inflammasome activation and cell death during influenza virus infection.</title>
        <authorList>
            <person name="Kuriakose T."/>
            <person name="Zheng M."/>
            <person name="Neale G."/>
            <person name="Kanneganti T.D."/>
        </authorList>
    </citation>
    <scope>INDUCTION</scope>
</reference>
<reference key="22">
    <citation type="journal article" date="2018" name="Trends Immunol.">
        <title>ZBP1: innate sensor regulating cell death and inflammation.</title>
        <authorList>
            <person name="Kuriakose T."/>
            <person name="Kanneganti T.D."/>
        </authorList>
    </citation>
    <scope>REVIEW</scope>
</reference>
<reference key="23">
    <citation type="journal article" date="2019" name="Immunity">
        <title>The nucleotide sensor ZBP1 and kinase RIPK3 induce the enzyme IRG1 to promote an antiviral metabolic state in neurons.</title>
        <authorList>
            <person name="Daniels B.P."/>
            <person name="Kofman S.B."/>
            <person name="Smith J.R."/>
            <person name="Norris G.T."/>
            <person name="Snyder A.G."/>
            <person name="Kolb J.P."/>
            <person name="Gao X."/>
            <person name="Locasale J.W."/>
            <person name="Martinez J."/>
            <person name="Gale M. Jr."/>
            <person name="Loo Y.M."/>
            <person name="Oberst A."/>
        </authorList>
    </citation>
    <scope>FUNCTION</scope>
</reference>
<reference key="24">
    <citation type="journal article" date="2019" name="EMBO Rep.">
        <title>Viral M45 and necroptosis-associated proteins form heteromeric amyloid assemblies.</title>
        <authorList>
            <person name="Pham C.L."/>
            <person name="Shanmugam N."/>
            <person name="Strange M."/>
            <person name="O'Carroll A."/>
            <person name="Brown J.W."/>
            <person name="Sierecki E."/>
            <person name="Gambin Y."/>
            <person name="Steain M."/>
            <person name="Sunde M."/>
        </authorList>
    </citation>
    <scope>FUNCTION</scope>
    <scope>INTERACTION WITH MURID HERPESVIRUS 1 RIR1 (MICROBIAL INFECTION)</scope>
</reference>
<reference key="25">
    <citation type="journal article" date="2019" name="J. Immunol.">
        <title>ZBP1/DAI Drives RIPK3-Mediated Cell Death Induced by IFNs in the Absence of RIPK1.</title>
        <authorList>
            <person name="Ingram J.P."/>
            <person name="Thapa R.J."/>
            <person name="Fisher A."/>
            <person name="Tummers B."/>
            <person name="Zhang T."/>
            <person name="Yin C."/>
            <person name="Rodriguez D.A."/>
            <person name="Guo H."/>
            <person name="Lane R."/>
            <person name="Williams R."/>
            <person name="Slifker M.J."/>
            <person name="Basagoudanavar S.H."/>
            <person name="Rall G.F."/>
            <person name="Dillon C.P."/>
            <person name="Green D.R."/>
            <person name="Kaiser W.J."/>
            <person name="Balachandran S."/>
        </authorList>
    </citation>
    <scope>FUNCTION</scope>
    <scope>ACTIVITY REGULATION</scope>
</reference>
<reference key="26">
    <citation type="journal article" date="2020" name="Cell">
        <title>Influenza virus Z-RNAs induce ZBP1-mediated necroptosis.</title>
        <authorList>
            <person name="Zhang T."/>
            <person name="Yin C."/>
            <person name="Boyd D.F."/>
            <person name="Quarato G."/>
            <person name="Ingram J.P."/>
            <person name="Shubina M."/>
            <person name="Ragan K.B."/>
            <person name="Ishizuka T."/>
            <person name="Crawford J.C."/>
            <person name="Tummers B."/>
            <person name="Rodriguez D.A."/>
            <person name="Xue J."/>
            <person name="Peri S."/>
            <person name="Kaiser W.J."/>
            <person name="Lopez C.B."/>
            <person name="Xu Y."/>
            <person name="Upton J.W."/>
            <person name="Thomas P.G."/>
            <person name="Green D.R."/>
            <person name="Balachandran S."/>
        </authorList>
    </citation>
    <scope>FUNCTION</scope>
    <scope>SUBCELLULAR LOCATION</scope>
    <scope>INTERACTION WITH RIPK3</scope>
    <scope>DISRUPTION PHENOTYPE</scope>
    <scope>DOMAIN</scope>
    <scope>MUTAGENESIS OF 192-ILE--GLY-195</scope>
</reference>
<reference key="27">
    <citation type="journal article" date="2020" name="Int. Immunol.">
        <title>ZBP1 governs the inflammasome-independent IL-1alpha and neutrophil inflammation that play a dual role in anti-influenza virus immunity.</title>
        <authorList>
            <person name="Momota M."/>
            <person name="Lelliott P."/>
            <person name="Kubo A."/>
            <person name="Kusakabe T."/>
            <person name="Kobiyama K."/>
            <person name="Kuroda E."/>
            <person name="Imai Y."/>
            <person name="Akira S."/>
            <person name="Coban C."/>
            <person name="Ishii K.J."/>
        </authorList>
    </citation>
    <scope>FUNCTION</scope>
</reference>
<reference key="28">
    <citation type="journal article" date="2020" name="Cell">
        <title>Caspase-6 is a key regulator of innate immunity, inflammasome activation, and host defense.</title>
        <authorList>
            <person name="Zheng M."/>
            <person name="Karki R."/>
            <person name="Vogel P."/>
            <person name="Kanneganti T.D."/>
        </authorList>
    </citation>
    <scope>FUNCTION</scope>
</reference>
<reference key="29">
    <citation type="journal article" date="2020" name="J. Biol. Chem.">
        <title>The Zalpha2 domain of ZBP1 is a molecular switch regulating influenza-induced PANoptosis and perinatal lethality during development.</title>
        <authorList>
            <person name="Kesavardhana S."/>
            <person name="Malireddi R.K.S."/>
            <person name="Burton A.R."/>
            <person name="Porter S.N."/>
            <person name="Vogel P."/>
            <person name="Pruett-Miller S.M."/>
            <person name="Kanneganti T.D."/>
        </authorList>
    </citation>
    <scope>FUNCTION</scope>
    <scope>DOMAIN</scope>
    <scope>MUTAGENESIS OF 77-ALA--GLY-150</scope>
</reference>
<reference key="30">
    <citation type="journal article" date="2020" name="J. Biol. Chem.">
        <title>ZBP1 promotes fungi-induced inflammasome activation and pyroptosis, apoptosis, and necroptosis (PANoptosis).</title>
        <authorList>
            <person name="Banoth B."/>
            <person name="Tuladhar S."/>
            <person name="Karki R."/>
            <person name="Sharma B.R."/>
            <person name="Briard B."/>
            <person name="Kesavardhana S."/>
            <person name="Burton A."/>
            <person name="Kanneganti T.D."/>
        </authorList>
    </citation>
    <scope>FUNCTION</scope>
    <scope>DOMAIN</scope>
</reference>
<reference key="31">
    <citation type="journal article" date="2020" name="J. Exp. Med.">
        <title>Sensing of endogenous nucleic acids by ZBP1 induces keratinocyte necroptosis and skin inflammation.</title>
        <authorList>
            <person name="Devos M."/>
            <person name="Tanghe G."/>
            <person name="Gilbert B."/>
            <person name="Dierick E."/>
            <person name="Verheirstraeten M."/>
            <person name="Nemegeer J."/>
            <person name="de Reuver R."/>
            <person name="Lefebvre S."/>
            <person name="De Munck J."/>
            <person name="Rehwinkel J."/>
            <person name="Vandenabeele P."/>
            <person name="Declercq W."/>
            <person name="Maelfait J."/>
        </authorList>
    </citation>
    <scope>FUNCTION</scope>
</reference>
<reference key="32">
    <citation type="journal article" date="2020" name="Nature">
        <title>Z-nucleic-acid sensing triggers ZBP1-dependent necroptosis and inflammation.</title>
        <authorList>
            <person name="Jiao H."/>
            <person name="Wachsmuth L."/>
            <person name="Kumari S."/>
            <person name="Schwarzer R."/>
            <person name="Lin J."/>
            <person name="Eren R.O."/>
            <person name="Fisher A."/>
            <person name="Lane R."/>
            <person name="Young G.R."/>
            <person name="Kassiotis G."/>
            <person name="Kaiser W.J."/>
            <person name="Pasparakis M."/>
        </authorList>
    </citation>
    <scope>FUNCTION</scope>
    <scope>ACTIVITY REGULATION</scope>
    <scope>SUBCELLULAR LOCATION</scope>
    <scope>MUTAGENESIS OF 46-ASN--TYR-50; 122-ASN--TYR-126 AND 192-ILE--GLY-195</scope>
</reference>
<reference key="33">
    <citation type="journal article" date="2021" name="Nature">
        <title>AIM2 forms a complex with pyrin and ZBP1 to drive PANoptosis and host defence.</title>
        <authorList>
            <person name="Lee S."/>
            <person name="Karki R."/>
            <person name="Wang Y."/>
            <person name="Nguyen L.N."/>
            <person name="Kalathur R.C."/>
            <person name="Kanneganti T.D."/>
        </authorList>
    </citation>
    <scope>FUNCTION</scope>
    <scope>IDENTIFICATION IN THE AIM2 PANOPTOSOME COMPLEX</scope>
</reference>
<reference key="34">
    <citation type="journal article" date="2021" name="Nat. Commun.">
        <title>ZBP1 promotes LPS-induced cell death and IL-1beta release via RHIM-mediated interactions with RIPK1.</title>
        <authorList>
            <person name="Muendlein H.I."/>
            <person name="Connolly W.M."/>
            <person name="Magri Z."/>
            <person name="Smirnova I."/>
            <person name="Ilyukha V."/>
            <person name="Gautam A."/>
            <person name="Degterev A."/>
            <person name="Poltorak A."/>
        </authorList>
    </citation>
    <scope>FUNCTION</scope>
    <scope>INTERACTION WITH RIPK1</scope>
</reference>
<reference key="35">
    <citation type="journal article" date="2001" name="Nat. Struct. Biol.">
        <title>Structure of the DLM-1-Z-DNA complex reveals a conserved family of Z-DNA-binding proteins.</title>
        <authorList>
            <person name="Schwartz T."/>
            <person name="Behlke J."/>
            <person name="Lowenhaupt K."/>
            <person name="Heinemann U."/>
            <person name="Rich A."/>
        </authorList>
    </citation>
    <scope>X-RAY CRYSTALLOGRAPHY (1.85 ANGSTROMS) OF 8-70</scope>
    <scope>DNA-BINDING</scope>
</reference>
<name>ZBP1_MOUSE</name>
<evidence type="ECO:0000255" key="1">
    <source>
        <dbReference type="PROSITE-ProRule" id="PRU00073"/>
    </source>
</evidence>
<evidence type="ECO:0000256" key="2">
    <source>
        <dbReference type="SAM" id="MobiDB-lite"/>
    </source>
</evidence>
<evidence type="ECO:0000269" key="3">
    <source>
    </source>
</evidence>
<evidence type="ECO:0000269" key="4">
    <source>
    </source>
</evidence>
<evidence type="ECO:0000269" key="5">
    <source>
    </source>
</evidence>
<evidence type="ECO:0000269" key="6">
    <source>
    </source>
</evidence>
<evidence type="ECO:0000269" key="7">
    <source>
    </source>
</evidence>
<evidence type="ECO:0000269" key="8">
    <source>
    </source>
</evidence>
<evidence type="ECO:0000269" key="9">
    <source>
    </source>
</evidence>
<evidence type="ECO:0000269" key="10">
    <source>
    </source>
</evidence>
<evidence type="ECO:0000269" key="11">
    <source>
    </source>
</evidence>
<evidence type="ECO:0000269" key="12">
    <source>
    </source>
</evidence>
<evidence type="ECO:0000269" key="13">
    <source>
    </source>
</evidence>
<evidence type="ECO:0000269" key="14">
    <source>
    </source>
</evidence>
<evidence type="ECO:0000269" key="15">
    <source>
    </source>
</evidence>
<evidence type="ECO:0000269" key="16">
    <source>
    </source>
</evidence>
<evidence type="ECO:0000269" key="17">
    <source>
    </source>
</evidence>
<evidence type="ECO:0000269" key="18">
    <source>
    </source>
</evidence>
<evidence type="ECO:0000269" key="19">
    <source>
    </source>
</evidence>
<evidence type="ECO:0000269" key="20">
    <source>
    </source>
</evidence>
<evidence type="ECO:0000269" key="21">
    <source>
    </source>
</evidence>
<evidence type="ECO:0000269" key="22">
    <source>
    </source>
</evidence>
<evidence type="ECO:0000269" key="23">
    <source>
    </source>
</evidence>
<evidence type="ECO:0000269" key="24">
    <source>
    </source>
</evidence>
<evidence type="ECO:0000269" key="25">
    <source>
    </source>
</evidence>
<evidence type="ECO:0000269" key="26">
    <source>
    </source>
</evidence>
<evidence type="ECO:0000269" key="27">
    <source>
    </source>
</evidence>
<evidence type="ECO:0000269" key="28">
    <source>
    </source>
</evidence>
<evidence type="ECO:0000269" key="29">
    <source>
    </source>
</evidence>
<evidence type="ECO:0000269" key="30">
    <source>
    </source>
</evidence>
<evidence type="ECO:0000303" key="31">
    <source>
    </source>
</evidence>
<evidence type="ECO:0000303" key="32">
    <source>
    </source>
</evidence>
<evidence type="ECO:0000303" key="33">
    <source>
    </source>
</evidence>
<evidence type="ECO:0000305" key="34"/>
<evidence type="ECO:0000312" key="35">
    <source>
        <dbReference type="MGI" id="MGI:1927449"/>
    </source>
</evidence>
<evidence type="ECO:0007829" key="36">
    <source>
        <dbReference type="PDB" id="2HEO"/>
    </source>
</evidence>
<feature type="chain" id="PRO_0000066565" description="Z-DNA-binding protein 1">
    <location>
        <begin position="1"/>
        <end position="411"/>
    </location>
</feature>
<feature type="domain" description="Z-binding 1" evidence="1">
    <location>
        <begin position="8"/>
        <end position="70"/>
    </location>
</feature>
<feature type="domain" description="Z-binding 2" evidence="1">
    <location>
        <begin position="84"/>
        <end position="148"/>
    </location>
</feature>
<feature type="region of interest" description="Disordered" evidence="2">
    <location>
        <begin position="60"/>
        <end position="86"/>
    </location>
</feature>
<feature type="region of interest" description="Disordered" evidence="2">
    <location>
        <begin position="263"/>
        <end position="303"/>
    </location>
</feature>
<feature type="region of interest" description="Disordered" evidence="2">
    <location>
        <begin position="332"/>
        <end position="411"/>
    </location>
</feature>
<feature type="short sequence motif" description="RIP homotypic interaction motif (RHIM) 1" evidence="6">
    <location>
        <begin position="188"/>
        <end position="205"/>
    </location>
</feature>
<feature type="short sequence motif" description="RIP homotypic interaction motif (RHIM) 2" evidence="6">
    <location>
        <begin position="237"/>
        <end position="261"/>
    </location>
</feature>
<feature type="compositionally biased region" description="Polar residues" evidence="2">
    <location>
        <begin position="268"/>
        <end position="292"/>
    </location>
</feature>
<feature type="compositionally biased region" description="Polar residues" evidence="2">
    <location>
        <begin position="350"/>
        <end position="371"/>
    </location>
</feature>
<feature type="compositionally biased region" description="Polar residues" evidence="2">
    <location>
        <begin position="400"/>
        <end position="411"/>
    </location>
</feature>
<feature type="cross-link" description="Glycyl lysine isopeptide (Lys-Gly) (interchain with G-Cter in ubiquitin)" evidence="14">
    <location>
        <position position="17"/>
    </location>
</feature>
<feature type="cross-link" description="Glycyl lysine isopeptide (Lys-Gly) (interchain with G-Cter in ubiquitin)" evidence="14">
    <location>
        <position position="43"/>
    </location>
</feature>
<feature type="splice variant" id="VSP_004083" description="In isoform 2." evidence="32">
    <original>AHSGVTQESPAIICQHNPVNMICQQGANSHISIA</original>
    <variation>VLPCSPGCPRTHHVDQAGLEPTEIFLLLPIKFWD</variation>
    <location>
        <begin position="154"/>
        <end position="187"/>
    </location>
</feature>
<feature type="splice variant" id="VSP_004084" description="In isoform 2." evidence="32">
    <location>
        <begin position="188"/>
        <end position="411"/>
    </location>
</feature>
<feature type="mutagenesis site" description="In ZBP1(Zalpha1); no effect. In ZBP1(Zalpha1-Zalpha2); knockin mice are viable and develop mild skin lesions in response to influenza A virus (IAV); mice are protected from the activation of RIPK3 and MLKL as well as the cell death; when associated with 122-D--A-126." evidence="13 15 18 24">
    <original>NQVLY</original>
    <variation>DQVLA</variation>
    <location>
        <begin position="46"/>
        <end position="50"/>
    </location>
</feature>
<feature type="mutagenesis site" description="Abolished ability to activate pyroptosis, necroptosis and apoptosis (PANoptosis) in response to influenza A virus (IAV) infection in knockin mice." evidence="27">
    <location>
        <begin position="77"/>
        <end position="150"/>
    </location>
</feature>
<feature type="mutagenesis site" description="In ZBP1(Zalpha2); abolished ability to sense influenza A virus (IAV) Z-RNAs. In ZBP1(Zalpha2); knockin mice are viable and develop mild skin lesions in response to influenza A virus (IAV). ZBP1(Zalpha2) knockin mice are protected from the activation of RIPK3 and MLKL as well as the cell death. In ZBP1(Zalpha1-Zalpha2); knockin mice are viable and develop mild skin lesions in response to influenza A virus (IAV); mice are protected from the activation of RIPK3 and MLKL as well as the cell death; when associated with 46-D--A-50." evidence="9 13 15 18 24">
    <original>NPLLY</original>
    <variation>DPLLA</variation>
    <location>
        <begin position="122"/>
        <end position="126"/>
    </location>
</feature>
<feature type="mutagenesis site" description="In mRHIMA; abolished interaction with RIPK3 and subsequent necroptosis. In ZBP1(Mr1) knockin mice are viable and do not develop skin inflammation in response to lethal dose of influenza A virus (IAV)." evidence="13 18 23 24">
    <original>IQIG</original>
    <variation>AAAA</variation>
    <location>
        <begin position="192"/>
        <end position="195"/>
    </location>
</feature>
<feature type="mutagenesis site" description="In mRHIMB; does not affect ability to induce necroptosis." evidence="13 18">
    <original>VQLG</original>
    <variation>AAAA</variation>
    <location>
        <begin position="248"/>
        <end position="251"/>
    </location>
</feature>
<feature type="mutagenesis site" description="Does not greatly affect phosphorylation status." evidence="5">
    <original>SS</original>
    <variation>AA</variation>
    <location>
        <begin position="352"/>
        <end position="353"/>
    </location>
</feature>
<feature type="sequence conflict" description="In Ref. 3; AAH20033." evidence="34" ref="3">
    <original>S</original>
    <variation>R</variation>
    <location>
        <position position="67"/>
    </location>
</feature>
<feature type="sequence conflict" description="In Ref. 3; AAH20033." evidence="34" ref="3">
    <original>N</original>
    <variation>D</variation>
    <location>
        <position position="83"/>
    </location>
</feature>
<feature type="sequence conflict" description="In Ref. 3; AAH20033." evidence="34" ref="3">
    <original>G</original>
    <variation>R</variation>
    <location>
        <position position="197"/>
    </location>
</feature>
<feature type="sequence conflict" description="In Ref. 3; AAH20033." evidence="34" ref="3">
    <original>F</original>
    <variation>S</variation>
    <location>
        <position position="293"/>
    </location>
</feature>
<feature type="sequence conflict" description="In Ref. 3; AAH20033." evidence="34" ref="3">
    <original>S</original>
    <variation>T</variation>
    <location>
        <position position="403"/>
    </location>
</feature>
<feature type="helix" evidence="36">
    <location>
        <begin position="13"/>
        <end position="25"/>
    </location>
</feature>
<feature type="helix" evidence="36">
    <location>
        <begin position="31"/>
        <end position="38"/>
    </location>
</feature>
<feature type="helix" evidence="36">
    <location>
        <begin position="42"/>
        <end position="54"/>
    </location>
</feature>
<feature type="strand" evidence="36">
    <location>
        <begin position="57"/>
        <end position="62"/>
    </location>
</feature>
<feature type="strand" evidence="36">
    <location>
        <begin position="65"/>
        <end position="68"/>
    </location>
</feature>
<organism>
    <name type="scientific">Mus musculus</name>
    <name type="common">Mouse</name>
    <dbReference type="NCBI Taxonomy" id="10090"/>
    <lineage>
        <taxon>Eukaryota</taxon>
        <taxon>Metazoa</taxon>
        <taxon>Chordata</taxon>
        <taxon>Craniata</taxon>
        <taxon>Vertebrata</taxon>
        <taxon>Euteleostomi</taxon>
        <taxon>Mammalia</taxon>
        <taxon>Eutheria</taxon>
        <taxon>Euarchontoglires</taxon>
        <taxon>Glires</taxon>
        <taxon>Rodentia</taxon>
        <taxon>Myomorpha</taxon>
        <taxon>Muroidea</taxon>
        <taxon>Muridae</taxon>
        <taxon>Murinae</taxon>
        <taxon>Mus</taxon>
        <taxon>Mus</taxon>
    </lineage>
</organism>
<protein>
    <recommendedName>
        <fullName evidence="33">Z-DNA-binding protein 1</fullName>
    </recommendedName>
    <alternativeName>
        <fullName evidence="33">DNA-dependent activator of IFN-regulatory factors</fullName>
        <shortName evidence="33">DAI</shortName>
    </alternativeName>
    <alternativeName>
        <fullName evidence="31">Tumor stroma and activated macrophage protein DLM-1</fullName>
    </alternativeName>
</protein>